<name>RS14_DINSH</name>
<evidence type="ECO:0000255" key="1">
    <source>
        <dbReference type="HAMAP-Rule" id="MF_00537"/>
    </source>
</evidence>
<evidence type="ECO:0000305" key="2"/>
<feature type="chain" id="PRO_1000128380" description="Small ribosomal subunit protein uS14">
    <location>
        <begin position="1"/>
        <end position="101"/>
    </location>
</feature>
<organism>
    <name type="scientific">Dinoroseobacter shibae (strain DSM 16493 / NCIMB 14021 / DFL 12)</name>
    <dbReference type="NCBI Taxonomy" id="398580"/>
    <lineage>
        <taxon>Bacteria</taxon>
        <taxon>Pseudomonadati</taxon>
        <taxon>Pseudomonadota</taxon>
        <taxon>Alphaproteobacteria</taxon>
        <taxon>Rhodobacterales</taxon>
        <taxon>Roseobacteraceae</taxon>
        <taxon>Dinoroseobacter</taxon>
    </lineage>
</organism>
<sequence>MAKKAMIEREKKRQKLVAKYAAKRAALKEIANDDSKPMEERFKARLKLAELPRNSSATRLHNRCQLTGRPHAYYRKLKISRIALRDLGSAGQIPGLVKSSW</sequence>
<comment type="function">
    <text evidence="1">Binds 16S rRNA, required for the assembly of 30S particles and may also be responsible for determining the conformation of the 16S rRNA at the A site.</text>
</comment>
<comment type="subunit">
    <text evidence="1">Part of the 30S ribosomal subunit. Contacts proteins S3 and S10.</text>
</comment>
<comment type="similarity">
    <text evidence="1">Belongs to the universal ribosomal protein uS14 family.</text>
</comment>
<reference key="1">
    <citation type="journal article" date="2010" name="ISME J.">
        <title>The complete genome sequence of the algal symbiont Dinoroseobacter shibae: a hitchhiker's guide to life in the sea.</title>
        <authorList>
            <person name="Wagner-Dobler I."/>
            <person name="Ballhausen B."/>
            <person name="Berger M."/>
            <person name="Brinkhoff T."/>
            <person name="Buchholz I."/>
            <person name="Bunk B."/>
            <person name="Cypionka H."/>
            <person name="Daniel R."/>
            <person name="Drepper T."/>
            <person name="Gerdts G."/>
            <person name="Hahnke S."/>
            <person name="Han C."/>
            <person name="Jahn D."/>
            <person name="Kalhoefer D."/>
            <person name="Kiss H."/>
            <person name="Klenk H.P."/>
            <person name="Kyrpides N."/>
            <person name="Liebl W."/>
            <person name="Liesegang H."/>
            <person name="Meincke L."/>
            <person name="Pati A."/>
            <person name="Petersen J."/>
            <person name="Piekarski T."/>
            <person name="Pommerenke C."/>
            <person name="Pradella S."/>
            <person name="Pukall R."/>
            <person name="Rabus R."/>
            <person name="Stackebrandt E."/>
            <person name="Thole S."/>
            <person name="Thompson L."/>
            <person name="Tielen P."/>
            <person name="Tomasch J."/>
            <person name="von Jan M."/>
            <person name="Wanphrut N."/>
            <person name="Wichels A."/>
            <person name="Zech H."/>
            <person name="Simon M."/>
        </authorList>
    </citation>
    <scope>NUCLEOTIDE SEQUENCE [LARGE SCALE GENOMIC DNA]</scope>
    <source>
        <strain>DSM 16493 / NCIMB 14021 / DFL 12</strain>
    </source>
</reference>
<accession>A8LM70</accession>
<protein>
    <recommendedName>
        <fullName evidence="1">Small ribosomal subunit protein uS14</fullName>
    </recommendedName>
    <alternativeName>
        <fullName evidence="2">30S ribosomal protein S14</fullName>
    </alternativeName>
</protein>
<keyword id="KW-1185">Reference proteome</keyword>
<keyword id="KW-0687">Ribonucleoprotein</keyword>
<keyword id="KW-0689">Ribosomal protein</keyword>
<keyword id="KW-0694">RNA-binding</keyword>
<keyword id="KW-0699">rRNA-binding</keyword>
<dbReference type="EMBL" id="CP000830">
    <property type="protein sequence ID" value="ABV92047.1"/>
    <property type="molecule type" value="Genomic_DNA"/>
</dbReference>
<dbReference type="RefSeq" id="WP_012176977.1">
    <property type="nucleotide sequence ID" value="NC_009952.1"/>
</dbReference>
<dbReference type="SMR" id="A8LM70"/>
<dbReference type="STRING" id="398580.Dshi_0298"/>
<dbReference type="KEGG" id="dsh:Dshi_0298"/>
<dbReference type="eggNOG" id="COG0199">
    <property type="taxonomic scope" value="Bacteria"/>
</dbReference>
<dbReference type="HOGENOM" id="CLU_139869_0_1_5"/>
<dbReference type="OrthoDB" id="9810484at2"/>
<dbReference type="Proteomes" id="UP000006833">
    <property type="component" value="Chromosome"/>
</dbReference>
<dbReference type="GO" id="GO:0005737">
    <property type="term" value="C:cytoplasm"/>
    <property type="evidence" value="ECO:0007669"/>
    <property type="project" value="UniProtKB-ARBA"/>
</dbReference>
<dbReference type="GO" id="GO:0015935">
    <property type="term" value="C:small ribosomal subunit"/>
    <property type="evidence" value="ECO:0007669"/>
    <property type="project" value="TreeGrafter"/>
</dbReference>
<dbReference type="GO" id="GO:0019843">
    <property type="term" value="F:rRNA binding"/>
    <property type="evidence" value="ECO:0007669"/>
    <property type="project" value="UniProtKB-UniRule"/>
</dbReference>
<dbReference type="GO" id="GO:0003735">
    <property type="term" value="F:structural constituent of ribosome"/>
    <property type="evidence" value="ECO:0007669"/>
    <property type="project" value="InterPro"/>
</dbReference>
<dbReference type="GO" id="GO:0006412">
    <property type="term" value="P:translation"/>
    <property type="evidence" value="ECO:0007669"/>
    <property type="project" value="UniProtKB-UniRule"/>
</dbReference>
<dbReference type="FunFam" id="1.10.287.1480:FF:000001">
    <property type="entry name" value="30S ribosomal protein S14"/>
    <property type="match status" value="1"/>
</dbReference>
<dbReference type="Gene3D" id="1.10.287.1480">
    <property type="match status" value="1"/>
</dbReference>
<dbReference type="HAMAP" id="MF_00537">
    <property type="entry name" value="Ribosomal_uS14_1"/>
    <property type="match status" value="1"/>
</dbReference>
<dbReference type="InterPro" id="IPR001209">
    <property type="entry name" value="Ribosomal_uS14"/>
</dbReference>
<dbReference type="InterPro" id="IPR023036">
    <property type="entry name" value="Ribosomal_uS14_bac/plastid"/>
</dbReference>
<dbReference type="InterPro" id="IPR018271">
    <property type="entry name" value="Ribosomal_uS14_CS"/>
</dbReference>
<dbReference type="NCBIfam" id="NF006477">
    <property type="entry name" value="PRK08881.1"/>
    <property type="match status" value="1"/>
</dbReference>
<dbReference type="PANTHER" id="PTHR19836">
    <property type="entry name" value="30S RIBOSOMAL PROTEIN S14"/>
    <property type="match status" value="1"/>
</dbReference>
<dbReference type="PANTHER" id="PTHR19836:SF19">
    <property type="entry name" value="SMALL RIBOSOMAL SUBUNIT PROTEIN US14M"/>
    <property type="match status" value="1"/>
</dbReference>
<dbReference type="Pfam" id="PF00253">
    <property type="entry name" value="Ribosomal_S14"/>
    <property type="match status" value="1"/>
</dbReference>
<dbReference type="SUPFAM" id="SSF57716">
    <property type="entry name" value="Glucocorticoid receptor-like (DNA-binding domain)"/>
    <property type="match status" value="1"/>
</dbReference>
<dbReference type="PROSITE" id="PS00527">
    <property type="entry name" value="RIBOSOMAL_S14"/>
    <property type="match status" value="1"/>
</dbReference>
<gene>
    <name evidence="1" type="primary">rpsN</name>
    <name type="ordered locus">Dshi_0298</name>
</gene>
<proteinExistence type="inferred from homology"/>